<dbReference type="EC" id="3.4.22.16"/>
<dbReference type="EMBL" id="BC102386">
    <property type="protein sequence ID" value="AAI02387.1"/>
    <property type="molecule type" value="mRNA"/>
</dbReference>
<dbReference type="RefSeq" id="NP_001029557.1">
    <property type="nucleotide sequence ID" value="NM_001034385.2"/>
</dbReference>
<dbReference type="SMR" id="Q3T0I2"/>
<dbReference type="FunCoup" id="Q3T0I2">
    <property type="interactions" value="887"/>
</dbReference>
<dbReference type="STRING" id="9913.ENSBTAP00000014593"/>
<dbReference type="MEROPS" id="C01.040"/>
<dbReference type="GlyCosmos" id="Q3T0I2">
    <property type="glycosylation" value="3 sites, No reported glycans"/>
</dbReference>
<dbReference type="GlyGen" id="Q3T0I2">
    <property type="glycosylation" value="3 sites"/>
</dbReference>
<dbReference type="PaxDb" id="9913-ENSBTAP00000014593"/>
<dbReference type="GeneID" id="510524"/>
<dbReference type="KEGG" id="bta:510524"/>
<dbReference type="CTD" id="1512"/>
<dbReference type="VEuPathDB" id="HostDB:ENSBTAG00000010992"/>
<dbReference type="eggNOG" id="KOG1543">
    <property type="taxonomic scope" value="Eukaryota"/>
</dbReference>
<dbReference type="HOGENOM" id="CLU_012184_1_1_1"/>
<dbReference type="InParanoid" id="Q3T0I2"/>
<dbReference type="OMA" id="TCKFQPQ"/>
<dbReference type="OrthoDB" id="10253408at2759"/>
<dbReference type="TreeFam" id="TF328985"/>
<dbReference type="Reactome" id="R-BTA-2132295">
    <property type="pathway name" value="MHC class II antigen presentation"/>
</dbReference>
<dbReference type="Reactome" id="R-BTA-5683826">
    <property type="pathway name" value="Surfactant metabolism"/>
</dbReference>
<dbReference type="Reactome" id="R-BTA-6798695">
    <property type="pathway name" value="Neutrophil degranulation"/>
</dbReference>
<dbReference type="Proteomes" id="UP000009136">
    <property type="component" value="Chromosome 21"/>
</dbReference>
<dbReference type="Bgee" id="ENSBTAG00000010992">
    <property type="expression patterns" value="Expressed in monocyte and 104 other cell types or tissues"/>
</dbReference>
<dbReference type="GO" id="GO:0097208">
    <property type="term" value="C:alveolar lamellar body"/>
    <property type="evidence" value="ECO:0000250"/>
    <property type="project" value="UniProtKB"/>
</dbReference>
<dbReference type="GO" id="GO:0005829">
    <property type="term" value="C:cytosol"/>
    <property type="evidence" value="ECO:0000250"/>
    <property type="project" value="UniProtKB"/>
</dbReference>
<dbReference type="GO" id="GO:0005615">
    <property type="term" value="C:extracellular space"/>
    <property type="evidence" value="ECO:0000250"/>
    <property type="project" value="UniProtKB"/>
</dbReference>
<dbReference type="GO" id="GO:0005764">
    <property type="term" value="C:lysosome"/>
    <property type="evidence" value="ECO:0000250"/>
    <property type="project" value="UniProtKB"/>
</dbReference>
<dbReference type="GO" id="GO:0004177">
    <property type="term" value="F:aminopeptidase activity"/>
    <property type="evidence" value="ECO:0000250"/>
    <property type="project" value="UniProtKB"/>
</dbReference>
<dbReference type="GO" id="GO:0008656">
    <property type="term" value="F:cysteine-type endopeptidase activator activity involved in apoptotic process"/>
    <property type="evidence" value="ECO:0000250"/>
    <property type="project" value="UniProtKB"/>
</dbReference>
<dbReference type="GO" id="GO:0004197">
    <property type="term" value="F:cysteine-type endopeptidase activity"/>
    <property type="evidence" value="ECO:0000250"/>
    <property type="project" value="UniProtKB"/>
</dbReference>
<dbReference type="GO" id="GO:0008234">
    <property type="term" value="F:cysteine-type peptidase activity"/>
    <property type="evidence" value="ECO:0000250"/>
    <property type="project" value="UniProtKB"/>
</dbReference>
<dbReference type="GO" id="GO:0004175">
    <property type="term" value="F:endopeptidase activity"/>
    <property type="evidence" value="ECO:0000250"/>
    <property type="project" value="UniProtKB"/>
</dbReference>
<dbReference type="GO" id="GO:0030108">
    <property type="term" value="F:HLA-A specific activating MHC class I receptor activity"/>
    <property type="evidence" value="ECO:0000250"/>
    <property type="project" value="UniProtKB"/>
</dbReference>
<dbReference type="GO" id="GO:0004252">
    <property type="term" value="F:serine-type endopeptidase activity"/>
    <property type="evidence" value="ECO:0000250"/>
    <property type="project" value="UniProtKB"/>
</dbReference>
<dbReference type="GO" id="GO:0070324">
    <property type="term" value="F:thyroid hormone binding"/>
    <property type="evidence" value="ECO:0000250"/>
    <property type="project" value="UniProtKB"/>
</dbReference>
<dbReference type="GO" id="GO:0010815">
    <property type="term" value="P:bradykinin catabolic process"/>
    <property type="evidence" value="ECO:0000250"/>
    <property type="project" value="UniProtKB"/>
</dbReference>
<dbReference type="GO" id="GO:0060448">
    <property type="term" value="P:dichotomous subdivision of terminal units involved in lung branching"/>
    <property type="evidence" value="ECO:0000250"/>
    <property type="project" value="UniProtKB"/>
</dbReference>
<dbReference type="GO" id="GO:0070371">
    <property type="term" value="P:ERK1 and ERK2 cascade"/>
    <property type="evidence" value="ECO:0000250"/>
    <property type="project" value="UniProtKB"/>
</dbReference>
<dbReference type="GO" id="GO:0006955">
    <property type="term" value="P:immune response"/>
    <property type="evidence" value="ECO:0000318"/>
    <property type="project" value="GO_Central"/>
</dbReference>
<dbReference type="GO" id="GO:0002764">
    <property type="term" value="P:immune response-regulating signaling pathway"/>
    <property type="evidence" value="ECO:0000250"/>
    <property type="project" value="UniProtKB"/>
</dbReference>
<dbReference type="GO" id="GO:0033619">
    <property type="term" value="P:membrane protein proteolysis"/>
    <property type="evidence" value="ECO:0000250"/>
    <property type="project" value="UniProtKB"/>
</dbReference>
<dbReference type="GO" id="GO:0001656">
    <property type="term" value="P:metanephros development"/>
    <property type="evidence" value="ECO:0000250"/>
    <property type="project" value="UniProtKB"/>
</dbReference>
<dbReference type="GO" id="GO:0010813">
    <property type="term" value="P:neuropeptide catabolic process"/>
    <property type="evidence" value="ECO:0000250"/>
    <property type="project" value="UniProtKB"/>
</dbReference>
<dbReference type="GO" id="GO:2001235">
    <property type="term" value="P:positive regulation of apoptotic signaling pathway"/>
    <property type="evidence" value="ECO:0000318"/>
    <property type="project" value="GO_Central"/>
</dbReference>
<dbReference type="GO" id="GO:0030335">
    <property type="term" value="P:positive regulation of cell migration"/>
    <property type="evidence" value="ECO:0000250"/>
    <property type="project" value="UniProtKB"/>
</dbReference>
<dbReference type="GO" id="GO:0010634">
    <property type="term" value="P:positive regulation of epithelial cell migration"/>
    <property type="evidence" value="ECO:0000250"/>
    <property type="project" value="UniProtKB"/>
</dbReference>
<dbReference type="GO" id="GO:0010628">
    <property type="term" value="P:positive regulation of gene expression"/>
    <property type="evidence" value="ECO:0000250"/>
    <property type="project" value="UniProtKB"/>
</dbReference>
<dbReference type="GO" id="GO:0031648">
    <property type="term" value="P:protein destabilization"/>
    <property type="evidence" value="ECO:0000250"/>
    <property type="project" value="UniProtKB"/>
</dbReference>
<dbReference type="GO" id="GO:0006508">
    <property type="term" value="P:proteolysis"/>
    <property type="evidence" value="ECO:0000250"/>
    <property type="project" value="UniProtKB"/>
</dbReference>
<dbReference type="GO" id="GO:0051603">
    <property type="term" value="P:proteolysis involved in protein catabolic process"/>
    <property type="evidence" value="ECO:0000318"/>
    <property type="project" value="GO_Central"/>
</dbReference>
<dbReference type="GO" id="GO:0032526">
    <property type="term" value="P:response to retinoic acid"/>
    <property type="evidence" value="ECO:0000250"/>
    <property type="project" value="UniProtKB"/>
</dbReference>
<dbReference type="GO" id="GO:0043129">
    <property type="term" value="P:surfactant homeostasis"/>
    <property type="evidence" value="ECO:0000250"/>
    <property type="project" value="UniProtKB"/>
</dbReference>
<dbReference type="GO" id="GO:0001913">
    <property type="term" value="P:T cell mediated cytotoxicity"/>
    <property type="evidence" value="ECO:0000250"/>
    <property type="project" value="UniProtKB"/>
</dbReference>
<dbReference type="GO" id="GO:0031638">
    <property type="term" value="P:zymogen activation"/>
    <property type="evidence" value="ECO:0000250"/>
    <property type="project" value="UniProtKB"/>
</dbReference>
<dbReference type="CDD" id="cd02248">
    <property type="entry name" value="Peptidase_C1A"/>
    <property type="match status" value="1"/>
</dbReference>
<dbReference type="FunFam" id="3.90.70.10:FF:000074">
    <property type="entry name" value="Pro-cathepsin H"/>
    <property type="match status" value="1"/>
</dbReference>
<dbReference type="Gene3D" id="3.90.70.10">
    <property type="entry name" value="Cysteine proteinases"/>
    <property type="match status" value="1"/>
</dbReference>
<dbReference type="InterPro" id="IPR038765">
    <property type="entry name" value="Papain-like_cys_pep_sf"/>
</dbReference>
<dbReference type="InterPro" id="IPR025661">
    <property type="entry name" value="Pept_asp_AS"/>
</dbReference>
<dbReference type="InterPro" id="IPR000169">
    <property type="entry name" value="Pept_cys_AS"/>
</dbReference>
<dbReference type="InterPro" id="IPR025660">
    <property type="entry name" value="Pept_his_AS"/>
</dbReference>
<dbReference type="InterPro" id="IPR013128">
    <property type="entry name" value="Peptidase_C1A"/>
</dbReference>
<dbReference type="InterPro" id="IPR000668">
    <property type="entry name" value="Peptidase_C1A_C"/>
</dbReference>
<dbReference type="InterPro" id="IPR039417">
    <property type="entry name" value="Peptidase_C1A_papain-like"/>
</dbReference>
<dbReference type="InterPro" id="IPR013201">
    <property type="entry name" value="Prot_inhib_I29"/>
</dbReference>
<dbReference type="PANTHER" id="PTHR12411">
    <property type="entry name" value="CYSTEINE PROTEASE FAMILY C1-RELATED"/>
    <property type="match status" value="1"/>
</dbReference>
<dbReference type="Pfam" id="PF08246">
    <property type="entry name" value="Inhibitor_I29"/>
    <property type="match status" value="1"/>
</dbReference>
<dbReference type="Pfam" id="PF00112">
    <property type="entry name" value="Peptidase_C1"/>
    <property type="match status" value="1"/>
</dbReference>
<dbReference type="PRINTS" id="PR00705">
    <property type="entry name" value="PAPAIN"/>
</dbReference>
<dbReference type="SMART" id="SM00848">
    <property type="entry name" value="Inhibitor_I29"/>
    <property type="match status" value="1"/>
</dbReference>
<dbReference type="SMART" id="SM00645">
    <property type="entry name" value="Pept_C1"/>
    <property type="match status" value="1"/>
</dbReference>
<dbReference type="SUPFAM" id="SSF54001">
    <property type="entry name" value="Cysteine proteinases"/>
    <property type="match status" value="1"/>
</dbReference>
<dbReference type="PROSITE" id="PS00640">
    <property type="entry name" value="THIOL_PROTEASE_ASN"/>
    <property type="match status" value="1"/>
</dbReference>
<dbReference type="PROSITE" id="PS00139">
    <property type="entry name" value="THIOL_PROTEASE_CYS"/>
    <property type="match status" value="1"/>
</dbReference>
<dbReference type="PROSITE" id="PS00639">
    <property type="entry name" value="THIOL_PROTEASE_HIS"/>
    <property type="match status" value="1"/>
</dbReference>
<keyword id="KW-1015">Disulfide bond</keyword>
<keyword id="KW-0325">Glycoprotein</keyword>
<keyword id="KW-0378">Hydrolase</keyword>
<keyword id="KW-0458">Lysosome</keyword>
<keyword id="KW-0645">Protease</keyword>
<keyword id="KW-1185">Reference proteome</keyword>
<keyword id="KW-0732">Signal</keyword>
<keyword id="KW-0788">Thiol protease</keyword>
<keyword id="KW-0865">Zymogen</keyword>
<organism>
    <name type="scientific">Bos taurus</name>
    <name type="common">Bovine</name>
    <dbReference type="NCBI Taxonomy" id="9913"/>
    <lineage>
        <taxon>Eukaryota</taxon>
        <taxon>Metazoa</taxon>
        <taxon>Chordata</taxon>
        <taxon>Craniata</taxon>
        <taxon>Vertebrata</taxon>
        <taxon>Euteleostomi</taxon>
        <taxon>Mammalia</taxon>
        <taxon>Eutheria</taxon>
        <taxon>Laurasiatheria</taxon>
        <taxon>Artiodactyla</taxon>
        <taxon>Ruminantia</taxon>
        <taxon>Pecora</taxon>
        <taxon>Bovidae</taxon>
        <taxon>Bovinae</taxon>
        <taxon>Bos</taxon>
    </lineage>
</organism>
<sequence>MWAVLPLLCAGAWLLGAPACGAAELAANSLEKFHFQSWMVQHQKKYSSEEYYHRLQAFASNLREINAHNARNHTFKMGLNQFSDMSFDELKRKYLWSEPQNCSATKSNYLRGTGPYPPSMDWRKKGNFVTPVKNQGSCGSCWTFSTTGALESAVAIATGKLPFLAEQQLVDCAQNFNNHGCQGGLPSQAFEYIRYNKGIMGEDTYPYRGQDGDCKYQPSKAIAFVKDVANITLNDEEAMVEAVALHNPVSFAFEVTADFMMYRKGIYSSTSCHKTPDKVNHAVLAVGYGEEKGIPYWIVKNSWGPNWGMKGYFLIERGKNMCGLAACASFPIPLV</sequence>
<proteinExistence type="evidence at transcript level"/>
<evidence type="ECO:0000250" key="1"/>
<evidence type="ECO:0000255" key="2"/>
<evidence type="ECO:0000255" key="3">
    <source>
        <dbReference type="PROSITE-ProRule" id="PRU10088"/>
    </source>
</evidence>
<evidence type="ECO:0000255" key="4">
    <source>
        <dbReference type="PROSITE-ProRule" id="PRU10089"/>
    </source>
</evidence>
<evidence type="ECO:0000255" key="5">
    <source>
        <dbReference type="PROSITE-ProRule" id="PRU10090"/>
    </source>
</evidence>
<feature type="signal peptide" evidence="1">
    <location>
        <begin position="1"/>
        <end position="22"/>
    </location>
</feature>
<feature type="propeptide" id="PRO_0000238112" description="Activation peptide" evidence="1">
    <location>
        <begin position="23"/>
        <end position="97"/>
    </location>
</feature>
<feature type="peptide" id="PRO_0000238113" description="Cathepsin H mini chain">
    <location>
        <begin position="98"/>
        <end position="105"/>
    </location>
</feature>
<feature type="propeptide" id="PRO_0000238114" evidence="1">
    <location>
        <begin position="106"/>
        <end position="115"/>
    </location>
</feature>
<feature type="chain" id="PRO_0000238115" description="Cathepsin H">
    <location>
        <begin position="116"/>
        <end position="335"/>
    </location>
</feature>
<feature type="chain" id="PRO_0000238116" description="Cathepsin H heavy chain">
    <location>
        <begin position="116"/>
        <end position="292"/>
    </location>
</feature>
<feature type="chain" id="PRO_0000238117" description="Cathepsin H light chain">
    <location>
        <begin position="293"/>
        <end position="335"/>
    </location>
</feature>
<feature type="active site" evidence="1">
    <location>
        <position position="141"/>
    </location>
</feature>
<feature type="active site" evidence="1">
    <location>
        <position position="281"/>
    </location>
</feature>
<feature type="active site" evidence="1">
    <location>
        <position position="301"/>
    </location>
</feature>
<feature type="glycosylation site" description="N-linked (GlcNAc...) asparagine" evidence="2">
    <location>
        <position position="72"/>
    </location>
</feature>
<feature type="glycosylation site" description="N-linked (GlcNAc...) asparagine" evidence="2">
    <location>
        <position position="101"/>
    </location>
</feature>
<feature type="glycosylation site" description="N-linked (GlcNAc...) asparagine" evidence="2">
    <location>
        <position position="230"/>
    </location>
</feature>
<feature type="disulfide bond" evidence="1">
    <location>
        <begin position="102"/>
        <end position="327"/>
    </location>
</feature>
<feature type="disulfide bond" evidence="1">
    <location>
        <begin position="138"/>
        <end position="181"/>
    </location>
</feature>
<feature type="disulfide bond" evidence="1">
    <location>
        <begin position="172"/>
        <end position="214"/>
    </location>
</feature>
<feature type="disulfide bond" evidence="1">
    <location>
        <begin position="272"/>
        <end position="322"/>
    </location>
</feature>
<name>CATH_BOVIN</name>
<reference key="1">
    <citation type="submission" date="2005-08" db="EMBL/GenBank/DDBJ databases">
        <authorList>
            <consortium name="NIH - Mammalian Gene Collection (MGC) project"/>
        </authorList>
    </citation>
    <scope>NUCLEOTIDE SEQUENCE [LARGE SCALE MRNA]</scope>
    <source>
        <strain>Crossbred X Angus</strain>
        <tissue>Ileum</tissue>
    </source>
</reference>
<comment type="function">
    <text evidence="1">Important for the overall degradation of proteins in lysosomes.</text>
</comment>
<comment type="catalytic activity">
    <reaction>
        <text>Hydrolysis of proteins, acting as an aminopeptidase (notably, cleaving Arg-|-Xaa bonds) as well as an endopeptidase.</text>
        <dbReference type="EC" id="3.4.22.16"/>
    </reaction>
</comment>
<comment type="subunit">
    <text evidence="1">Composed of a mini chain and a large chain. The large chain may be split into heavy and light chain. All chains are held together by disulfide bonds (By similarity).</text>
</comment>
<comment type="subcellular location">
    <subcellularLocation>
        <location evidence="1">Lysosome</location>
    </subcellularLocation>
</comment>
<comment type="similarity">
    <text evidence="3 4 5">Belongs to the peptidase C1 family.</text>
</comment>
<gene>
    <name type="primary">CTSH</name>
</gene>
<accession>Q3T0I2</accession>
<protein>
    <recommendedName>
        <fullName>Pro-cathepsin H</fullName>
    </recommendedName>
    <component>
        <recommendedName>
            <fullName>Cathepsin H mini chain</fullName>
        </recommendedName>
    </component>
    <component>
        <recommendedName>
            <fullName>Cathepsin H</fullName>
            <ecNumber>3.4.22.16</ecNumber>
        </recommendedName>
    </component>
    <component>
        <recommendedName>
            <fullName>Cathepsin H heavy chain</fullName>
        </recommendedName>
    </component>
    <component>
        <recommendedName>
            <fullName>Cathepsin H light chain</fullName>
        </recommendedName>
    </component>
</protein>